<dbReference type="EMBL" id="L22036">
    <property type="protein sequence ID" value="AAA25952.1"/>
    <property type="molecule type" value="Genomic_DNA"/>
</dbReference>
<dbReference type="EMBL" id="AE004091">
    <property type="protein sequence ID" value="AAG03800.1"/>
    <property type="molecule type" value="Genomic_DNA"/>
</dbReference>
<dbReference type="PIR" id="S40037">
    <property type="entry name" value="S40037"/>
</dbReference>
<dbReference type="RefSeq" id="NP_249102.1">
    <property type="nucleotide sequence ID" value="NC_002516.2"/>
</dbReference>
<dbReference type="RefSeq" id="WP_003100940.1">
    <property type="nucleotide sequence ID" value="NZ_QZGE01000016.1"/>
</dbReference>
<dbReference type="PDB" id="7ZJR">
    <property type="method" value="X-ray"/>
    <property type="resolution" value="2.50 A"/>
    <property type="chains" value="A=36-309"/>
</dbReference>
<dbReference type="PDB" id="8WDF">
    <property type="method" value="X-ray"/>
    <property type="resolution" value="3.00 A"/>
    <property type="chains" value="A=43-306"/>
</dbReference>
<dbReference type="PDBsum" id="7ZJR"/>
<dbReference type="PDBsum" id="8WDF"/>
<dbReference type="SMR" id="P42257"/>
<dbReference type="STRING" id="208964.PA0411"/>
<dbReference type="PaxDb" id="208964-PA0411"/>
<dbReference type="GeneID" id="878180"/>
<dbReference type="KEGG" id="pae:PA0411"/>
<dbReference type="PATRIC" id="fig|208964.12.peg.432"/>
<dbReference type="PseudoCAP" id="PA0411"/>
<dbReference type="HOGENOM" id="CLU_000445_107_27_6"/>
<dbReference type="InParanoid" id="P42257"/>
<dbReference type="OrthoDB" id="9177152at2"/>
<dbReference type="PhylomeDB" id="P42257"/>
<dbReference type="BioCyc" id="PAER208964:G1FZ6-415-MONOMER"/>
<dbReference type="Proteomes" id="UP000002438">
    <property type="component" value="Chromosome"/>
</dbReference>
<dbReference type="GO" id="GO:0005886">
    <property type="term" value="C:plasma membrane"/>
    <property type="evidence" value="ECO:0007669"/>
    <property type="project" value="UniProtKB-SubCell"/>
</dbReference>
<dbReference type="GO" id="GO:0004888">
    <property type="term" value="F:transmembrane signaling receptor activity"/>
    <property type="evidence" value="ECO:0007669"/>
    <property type="project" value="InterPro"/>
</dbReference>
<dbReference type="GO" id="GO:0006935">
    <property type="term" value="P:chemotaxis"/>
    <property type="evidence" value="ECO:0000318"/>
    <property type="project" value="GO_Central"/>
</dbReference>
<dbReference type="GO" id="GO:0007165">
    <property type="term" value="P:signal transduction"/>
    <property type="evidence" value="ECO:0007669"/>
    <property type="project" value="UniProtKB-KW"/>
</dbReference>
<dbReference type="CDD" id="cd11386">
    <property type="entry name" value="MCP_signal"/>
    <property type="match status" value="1"/>
</dbReference>
<dbReference type="FunFam" id="1.10.287.950:FF:000001">
    <property type="entry name" value="Methyl-accepting chemotaxis sensory transducer"/>
    <property type="match status" value="1"/>
</dbReference>
<dbReference type="Gene3D" id="1.10.287.950">
    <property type="entry name" value="Methyl-accepting chemotaxis protein"/>
    <property type="match status" value="1"/>
</dbReference>
<dbReference type="InterPro" id="IPR004090">
    <property type="entry name" value="Chemotax_Me-accpt_rcpt"/>
</dbReference>
<dbReference type="InterPro" id="IPR003660">
    <property type="entry name" value="HAMP_dom"/>
</dbReference>
<dbReference type="InterPro" id="IPR004089">
    <property type="entry name" value="MCPsignal_dom"/>
</dbReference>
<dbReference type="InterPro" id="IPR029095">
    <property type="entry name" value="NarX-like_N"/>
</dbReference>
<dbReference type="PANTHER" id="PTHR32089:SF119">
    <property type="entry name" value="METHYL-ACCEPTING CHEMOTAXIS PROTEIN CTPL"/>
    <property type="match status" value="1"/>
</dbReference>
<dbReference type="PANTHER" id="PTHR32089">
    <property type="entry name" value="METHYL-ACCEPTING CHEMOTAXIS PROTEIN MCPB"/>
    <property type="match status" value="1"/>
</dbReference>
<dbReference type="Pfam" id="PF00015">
    <property type="entry name" value="MCPsignal"/>
    <property type="match status" value="1"/>
</dbReference>
<dbReference type="Pfam" id="PF13675">
    <property type="entry name" value="PilJ"/>
    <property type="match status" value="1"/>
</dbReference>
<dbReference type="PRINTS" id="PR00260">
    <property type="entry name" value="CHEMTRNSDUCR"/>
</dbReference>
<dbReference type="SMART" id="SM00283">
    <property type="entry name" value="MA"/>
    <property type="match status" value="1"/>
</dbReference>
<dbReference type="SUPFAM" id="SSF58104">
    <property type="entry name" value="Methyl-accepting chemotaxis protein (MCP) signaling domain"/>
    <property type="match status" value="1"/>
</dbReference>
<dbReference type="PROSITE" id="PS50111">
    <property type="entry name" value="CHEMOTAXIS_TRANSDUC_2"/>
    <property type="match status" value="1"/>
</dbReference>
<dbReference type="PROSITE" id="PS50885">
    <property type="entry name" value="HAMP"/>
    <property type="match status" value="1"/>
</dbReference>
<protein>
    <recommendedName>
        <fullName>Protein PilJ</fullName>
    </recommendedName>
</protein>
<feature type="chain" id="PRO_0000110562" description="Protein PilJ">
    <location>
        <begin position="1"/>
        <end position="682"/>
    </location>
</feature>
<feature type="topological domain" description="Cytoplasmic" evidence="1">
    <location>
        <begin position="1"/>
        <end position="14"/>
    </location>
</feature>
<feature type="transmembrane region" description="Helical" evidence="1">
    <location>
        <begin position="15"/>
        <end position="38"/>
    </location>
</feature>
<feature type="topological domain" description="Periplasmic" evidence="1">
    <location>
        <begin position="39"/>
        <end position="306"/>
    </location>
</feature>
<feature type="transmembrane region" description="Helical" evidence="1">
    <location>
        <begin position="307"/>
        <end position="333"/>
    </location>
</feature>
<feature type="topological domain" description="Cytoplasmic" evidence="1">
    <location>
        <begin position="334"/>
        <end position="682"/>
    </location>
</feature>
<feature type="domain" description="HAMP" evidence="2">
    <location>
        <begin position="347"/>
        <end position="398"/>
    </location>
</feature>
<feature type="domain" description="Methyl-accepting transducer" evidence="3">
    <location>
        <begin position="403"/>
        <end position="639"/>
    </location>
</feature>
<feature type="helix" evidence="5">
    <location>
        <begin position="46"/>
        <end position="72"/>
    </location>
</feature>
<feature type="helix" evidence="5">
    <location>
        <begin position="77"/>
        <end position="98"/>
    </location>
</feature>
<feature type="helix" evidence="5">
    <location>
        <begin position="101"/>
        <end position="103"/>
    </location>
</feature>
<feature type="helix" evidence="5">
    <location>
        <begin position="110"/>
        <end position="112"/>
    </location>
</feature>
<feature type="helix" evidence="5">
    <location>
        <begin position="113"/>
        <end position="134"/>
    </location>
</feature>
<feature type="helix" evidence="5">
    <location>
        <begin position="137"/>
        <end position="170"/>
    </location>
</feature>
<feature type="helix" evidence="5">
    <location>
        <begin position="175"/>
        <end position="199"/>
    </location>
</feature>
<feature type="helix" evidence="5">
    <location>
        <begin position="205"/>
        <end position="228"/>
    </location>
</feature>
<feature type="turn" evidence="5">
    <location>
        <begin position="231"/>
        <end position="234"/>
    </location>
</feature>
<feature type="helix" evidence="5">
    <location>
        <begin position="241"/>
        <end position="302"/>
    </location>
</feature>
<name>PILJ_PSEAE</name>
<comment type="function">
    <text>May be a part of a signal-transduction system that regulates twitching motility by controlling pilus function (extension and retraction).</text>
</comment>
<comment type="subcellular location">
    <subcellularLocation>
        <location evidence="4">Cell inner membrane</location>
        <topology evidence="4">Multi-pass membrane protein</topology>
    </subcellularLocation>
</comment>
<comment type="similarity">
    <text evidence="4">Belongs to the methyl-accepting chemotaxis (MCP) protein family.</text>
</comment>
<gene>
    <name type="primary">pilJ</name>
    <name type="ordered locus">PA0411</name>
</gene>
<keyword id="KW-0002">3D-structure</keyword>
<keyword id="KW-0997">Cell inner membrane</keyword>
<keyword id="KW-1003">Cell membrane</keyword>
<keyword id="KW-0472">Membrane</keyword>
<keyword id="KW-0488">Methylation</keyword>
<keyword id="KW-1185">Reference proteome</keyword>
<keyword id="KW-0807">Transducer</keyword>
<keyword id="KW-0812">Transmembrane</keyword>
<keyword id="KW-1133">Transmembrane helix</keyword>
<proteinExistence type="evidence at protein level"/>
<sequence length="682" mass="72528">MKKINAGNLFAGMRSSSVIAGLFIVLIVSIVLLFANFAYLNTQSNHDKQYIGHAGELRVLSQRIAKNATEAAAGKGEAFKLLKDARNDFEKRWNILVNGDESTSLPPSPEAVKPQMDVVQQDWDGLRKNADSILASEQTVLSLHQVASTLAETIPQLQVEYEEVVDILLENGAPADQVAVAQRQSLLAERILGSVNKVLAGDENSVQAADSFGRDASLFGRVLKGMQEGNAAMSISKVTNAEAVDRLNEIAELFEFVSGSVDEILETSPDLFQVREAANNIFSVSQTLLDKASQLADGFENLAGGRSINLFAGYALGALALASIILIGLVMVRETNRRLAETAEKNDRNQAAILRLLDEIADLADGDLTVAATVTEDFTGAIADSINYSIDQLRELVETINQTAVQVAAAAQETQSTAMHLAEASEHQAQEIAGASAAINEMAVSIDQVSANASESSAVAERSVAIANKGNEVVHNTITGMDNIREQIQDTSKRIKRLGESSQEIGDIVSLINDIADQTNILALNAAIQASMAGDAGRGFAVVADEVQRLAERSSAATKQIEALVKTIQTDTNEAVISMEQTTSEVVRGARLAQDAGVALEEIEKVSKTLAALIQNISNAARQQASSAGHISNTMNVIQEITSQTSAGTTATARSIGNLAKMASEMRNSVSGFKLPEGVEQA</sequence>
<reference key="1">
    <citation type="journal article" date="1994" name="Mol. Microbiol.">
        <title>Characterization of a Pseudomonas aeruginosa gene cluster involved in pilus biosynthesis and twitching motility: sequence similarity to the chemotaxis proteins of enterics and the gliding bacterium Myxococcus xanthus.</title>
        <authorList>
            <person name="Darzins A."/>
        </authorList>
    </citation>
    <scope>NUCLEOTIDE SEQUENCE [GENOMIC DNA]</scope>
    <source>
        <strain>ATCC 15692 / DSM 22644 / CIP 104116 / JCM 14847 / LMG 12228 / 1C / PRS 101 / PAO1</strain>
    </source>
</reference>
<reference key="2">
    <citation type="journal article" date="2000" name="Nature">
        <title>Complete genome sequence of Pseudomonas aeruginosa PAO1, an opportunistic pathogen.</title>
        <authorList>
            <person name="Stover C.K."/>
            <person name="Pham X.-Q.T."/>
            <person name="Erwin A.L."/>
            <person name="Mizoguchi S.D."/>
            <person name="Warrener P."/>
            <person name="Hickey M.J."/>
            <person name="Brinkman F.S.L."/>
            <person name="Hufnagle W.O."/>
            <person name="Kowalik D.J."/>
            <person name="Lagrou M."/>
            <person name="Garber R.L."/>
            <person name="Goltry L."/>
            <person name="Tolentino E."/>
            <person name="Westbrock-Wadman S."/>
            <person name="Yuan Y."/>
            <person name="Brody L.L."/>
            <person name="Coulter S.N."/>
            <person name="Folger K.R."/>
            <person name="Kas A."/>
            <person name="Larbig K."/>
            <person name="Lim R.M."/>
            <person name="Smith K.A."/>
            <person name="Spencer D.H."/>
            <person name="Wong G.K.-S."/>
            <person name="Wu Z."/>
            <person name="Paulsen I.T."/>
            <person name="Reizer J."/>
            <person name="Saier M.H. Jr."/>
            <person name="Hancock R.E.W."/>
            <person name="Lory S."/>
            <person name="Olson M.V."/>
        </authorList>
    </citation>
    <scope>NUCLEOTIDE SEQUENCE [LARGE SCALE GENOMIC DNA]</scope>
    <source>
        <strain>ATCC 15692 / DSM 22644 / CIP 104116 / JCM 14847 / LMG 12228 / 1C / PRS 101 / PAO1</strain>
    </source>
</reference>
<organism>
    <name type="scientific">Pseudomonas aeruginosa (strain ATCC 15692 / DSM 22644 / CIP 104116 / JCM 14847 / LMG 12228 / 1C / PRS 101 / PAO1)</name>
    <dbReference type="NCBI Taxonomy" id="208964"/>
    <lineage>
        <taxon>Bacteria</taxon>
        <taxon>Pseudomonadati</taxon>
        <taxon>Pseudomonadota</taxon>
        <taxon>Gammaproteobacteria</taxon>
        <taxon>Pseudomonadales</taxon>
        <taxon>Pseudomonadaceae</taxon>
        <taxon>Pseudomonas</taxon>
    </lineage>
</organism>
<accession>P42257</accession>
<evidence type="ECO:0000255" key="1"/>
<evidence type="ECO:0000255" key="2">
    <source>
        <dbReference type="PROSITE-ProRule" id="PRU00102"/>
    </source>
</evidence>
<evidence type="ECO:0000255" key="3">
    <source>
        <dbReference type="PROSITE-ProRule" id="PRU00284"/>
    </source>
</evidence>
<evidence type="ECO:0000305" key="4"/>
<evidence type="ECO:0007829" key="5">
    <source>
        <dbReference type="PDB" id="7ZJR"/>
    </source>
</evidence>